<sequence length="382" mass="43467">MDGNSTHPAPNLKTTMAWSRISNQLGHWNDRKVIAIPLSDFLNTHPDIQSGIIAEFKKATGEEGMFARDPESLGIMLLGPVKLFKPDSVVVDGNLFWDPKGIHASAPKEQQKKAKIPRPPNAYILYRKDHHREIREQNPGLHNNEISVIVGNMWRDEQPHIREKYFNMSNEIKTRLLLENPDYRYNPRRSQDIRRRVSPYLKIKLLNYDVNGNLLWGTVNAEDAALIRTHFHGVVRVEEMDDGCRIVCRPVAGSRKLRAAVVDTWMPRYTVDTTPVTEDDDAQAFNFNDPLGGAYFPLNEHLWITVNQNPPFNAPPPNPNPHLDFVHPDGMEAVVHNVQNMIAQVQEANEAAALTLPPPPPLRLLSLRLWLMIPLTQLSFPL</sequence>
<accession>P36981</accession>
<reference key="1">
    <citation type="journal article" date="1990" name="Proc. Natl. Acad. Sci. U.S.A.">
        <title>Neurospora crassa a mating-type region.</title>
        <authorList>
            <person name="Staben C."/>
            <person name="Yanofsky C."/>
        </authorList>
    </citation>
    <scope>NUCLEOTIDE SEQUENCE [GENOMIC DNA]</scope>
    <scope>MUTAGENESIS OF ARG-258</scope>
    <source>
        <strain>74-ORS-6a / FGSC 4200</strain>
    </source>
</reference>
<reference key="2">
    <citation type="journal article" date="1994" name="Genetics">
        <title>Functional analyses of the Neurospora crassa MT a-1 mating type polypeptide.</title>
        <authorList>
            <person name="Philley M.L."/>
            <person name="Staben C."/>
        </authorList>
    </citation>
    <scope>FUNCTION</scope>
    <scope>DEVELOPMENTAL STAGE</scope>
</reference>
<reference key="3">
    <citation type="journal article" date="2002" name="Mol. Microbiol.">
        <title>The Neurospora crassa pheromone precursor genes are regulated by the mating type locus and the circadian clock.</title>
        <authorList>
            <person name="Bobrowicz P."/>
            <person name="Pawlak R."/>
            <person name="Correa A."/>
            <person name="Bell-Pedersen D."/>
            <person name="Ebbole D.J."/>
        </authorList>
    </citation>
    <scope>FUNCTION IN TRANSCRIPTIONAL ACTIVATION</scope>
    <source>
        <strain>74-ORS-6a / FGSC 4200</strain>
    </source>
</reference>
<keyword id="KW-0238">DNA-binding</keyword>
<keyword id="KW-0539">Nucleus</keyword>
<keyword id="KW-0804">Transcription</keyword>
<keyword id="KW-0805">Transcription regulation</keyword>
<proteinExistence type="evidence at protein level"/>
<dbReference type="EMBL" id="M54787">
    <property type="protein sequence ID" value="AAA33598.2"/>
    <property type="molecule type" value="Genomic_DNA"/>
</dbReference>
<dbReference type="PIR" id="T10163">
    <property type="entry name" value="T10163"/>
</dbReference>
<dbReference type="SMR" id="P36981"/>
<dbReference type="GO" id="GO:0005634">
    <property type="term" value="C:nucleus"/>
    <property type="evidence" value="ECO:0007669"/>
    <property type="project" value="UniProtKB-SubCell"/>
</dbReference>
<dbReference type="GO" id="GO:0001228">
    <property type="term" value="F:DNA-binding transcription activator activity, RNA polymerase II-specific"/>
    <property type="evidence" value="ECO:0007669"/>
    <property type="project" value="TreeGrafter"/>
</dbReference>
<dbReference type="GO" id="GO:0000978">
    <property type="term" value="F:RNA polymerase II cis-regulatory region sequence-specific DNA binding"/>
    <property type="evidence" value="ECO:0007669"/>
    <property type="project" value="TreeGrafter"/>
</dbReference>
<dbReference type="GO" id="GO:0030154">
    <property type="term" value="P:cell differentiation"/>
    <property type="evidence" value="ECO:0007669"/>
    <property type="project" value="TreeGrafter"/>
</dbReference>
<dbReference type="CDD" id="cd01389">
    <property type="entry name" value="HMG-box_ROX1-like"/>
    <property type="match status" value="1"/>
</dbReference>
<dbReference type="FunFam" id="1.10.30.10:FF:000041">
    <property type="entry name" value="HMG box family protein"/>
    <property type="match status" value="1"/>
</dbReference>
<dbReference type="Gene3D" id="1.10.30.10">
    <property type="entry name" value="High mobility group box domain"/>
    <property type="match status" value="1"/>
</dbReference>
<dbReference type="InterPro" id="IPR009071">
    <property type="entry name" value="HMG_box_dom"/>
</dbReference>
<dbReference type="InterPro" id="IPR036910">
    <property type="entry name" value="HMG_box_dom_sf"/>
</dbReference>
<dbReference type="InterPro" id="IPR050140">
    <property type="entry name" value="SRY-related_HMG-box_TF-like"/>
</dbReference>
<dbReference type="PANTHER" id="PTHR10270:SF161">
    <property type="entry name" value="SEX-DETERMINING REGION Y PROTEIN"/>
    <property type="match status" value="1"/>
</dbReference>
<dbReference type="PANTHER" id="PTHR10270">
    <property type="entry name" value="SOX TRANSCRIPTION FACTOR"/>
    <property type="match status" value="1"/>
</dbReference>
<dbReference type="Pfam" id="PF00505">
    <property type="entry name" value="HMG_box"/>
    <property type="match status" value="1"/>
</dbReference>
<dbReference type="SMART" id="SM00398">
    <property type="entry name" value="HMG"/>
    <property type="match status" value="1"/>
</dbReference>
<dbReference type="SUPFAM" id="SSF47095">
    <property type="entry name" value="HMG-box"/>
    <property type="match status" value="1"/>
</dbReference>
<dbReference type="PROSITE" id="PS50118">
    <property type="entry name" value="HMG_BOX_2"/>
    <property type="match status" value="1"/>
</dbReference>
<organism>
    <name type="scientific">Neurospora crassa</name>
    <dbReference type="NCBI Taxonomy" id="5141"/>
    <lineage>
        <taxon>Eukaryota</taxon>
        <taxon>Fungi</taxon>
        <taxon>Dikarya</taxon>
        <taxon>Ascomycota</taxon>
        <taxon>Pezizomycotina</taxon>
        <taxon>Sordariomycetes</taxon>
        <taxon>Sordariomycetidae</taxon>
        <taxon>Sordariales</taxon>
        <taxon>Sordariaceae</taxon>
        <taxon>Neurospora</taxon>
    </lineage>
</organism>
<comment type="function">
    <text evidence="2 4">Mating type proteins are sequence specific DNA-binding proteins that act as master switches in yeast differentiation by controlling gene expression in a cell type-specific fashion. Transcriptional activator that induces the transcription of a-specific genes like mating factor mfa-1. Required for mating as an a-cell, blocking of heterokaryon formation (vegetative incompatibility) and for perithecium induction.</text>
</comment>
<comment type="subunit">
    <text>Binds in vitro to DNA containing a specific core sequence 5'-CTTTG-3'.</text>
</comment>
<comment type="subcellular location">
    <subcellularLocation>
        <location evidence="1">Nucleus</location>
    </subcellularLocation>
</comment>
<comment type="developmental stage">
    <text evidence="4">Only present in a-cells and in a/A diploid cells.</text>
</comment>
<comment type="caution">
    <text evidence="5">Do not confuse Mt a-1 with MT A-1; these are two different proteins.</text>
</comment>
<feature type="chain" id="PRO_0000048588" description="Mating-type protein a-1">
    <location>
        <begin position="1"/>
        <end position="382"/>
    </location>
</feature>
<feature type="DNA-binding region" description="HMG box" evidence="1">
    <location>
        <begin position="116"/>
        <end position="184"/>
    </location>
</feature>
<feature type="mutagenesis site" description="In a-1m33; abolishes vegetative incompatibility." evidence="3">
    <original>R</original>
    <variation>S</variation>
    <location>
        <position position="258"/>
    </location>
</feature>
<name>MATB_NEUCS</name>
<protein>
    <recommendedName>
        <fullName>Mating-type protein a-1</fullName>
        <shortName>Mt a-1</shortName>
    </recommendedName>
</protein>
<gene>
    <name type="primary">mta-1</name>
</gene>
<evidence type="ECO:0000255" key="1">
    <source>
        <dbReference type="PROSITE-ProRule" id="PRU00267"/>
    </source>
</evidence>
<evidence type="ECO:0000269" key="2">
    <source>
    </source>
</evidence>
<evidence type="ECO:0000269" key="3">
    <source>
    </source>
</evidence>
<evidence type="ECO:0000269" key="4">
    <source>
    </source>
</evidence>
<evidence type="ECO:0000305" key="5"/>